<feature type="chain" id="PRO_1000198687" description="Pyrimidine/purine nucleoside phosphorylase">
    <location>
        <begin position="1"/>
        <end position="95"/>
    </location>
</feature>
<comment type="function">
    <text evidence="1">Catalyzes the phosphorolysis of diverse nucleosides, yielding D-ribose 1-phosphate and the respective free bases. Can use uridine, adenosine, guanosine, cytidine, thymidine, inosine and xanthosine as substrates. Also catalyzes the reverse reactions.</text>
</comment>
<comment type="catalytic activity">
    <reaction evidence="1">
        <text>a purine D-ribonucleoside + phosphate = a purine nucleobase + alpha-D-ribose 1-phosphate</text>
        <dbReference type="Rhea" id="RHEA:19805"/>
        <dbReference type="ChEBI" id="CHEBI:26386"/>
        <dbReference type="ChEBI" id="CHEBI:43474"/>
        <dbReference type="ChEBI" id="CHEBI:57720"/>
        <dbReference type="ChEBI" id="CHEBI:142355"/>
        <dbReference type="EC" id="2.4.2.1"/>
    </reaction>
</comment>
<comment type="catalytic activity">
    <reaction evidence="1">
        <text>adenosine + phosphate = alpha-D-ribose 1-phosphate + adenine</text>
        <dbReference type="Rhea" id="RHEA:27642"/>
        <dbReference type="ChEBI" id="CHEBI:16335"/>
        <dbReference type="ChEBI" id="CHEBI:16708"/>
        <dbReference type="ChEBI" id="CHEBI:43474"/>
        <dbReference type="ChEBI" id="CHEBI:57720"/>
        <dbReference type="EC" id="2.4.2.1"/>
    </reaction>
</comment>
<comment type="catalytic activity">
    <reaction evidence="1">
        <text>cytidine + phosphate = cytosine + alpha-D-ribose 1-phosphate</text>
        <dbReference type="Rhea" id="RHEA:52540"/>
        <dbReference type="ChEBI" id="CHEBI:16040"/>
        <dbReference type="ChEBI" id="CHEBI:17562"/>
        <dbReference type="ChEBI" id="CHEBI:43474"/>
        <dbReference type="ChEBI" id="CHEBI:57720"/>
        <dbReference type="EC" id="2.4.2.2"/>
    </reaction>
</comment>
<comment type="catalytic activity">
    <reaction evidence="1">
        <text>guanosine + phosphate = alpha-D-ribose 1-phosphate + guanine</text>
        <dbReference type="Rhea" id="RHEA:13233"/>
        <dbReference type="ChEBI" id="CHEBI:16235"/>
        <dbReference type="ChEBI" id="CHEBI:16750"/>
        <dbReference type="ChEBI" id="CHEBI:43474"/>
        <dbReference type="ChEBI" id="CHEBI:57720"/>
        <dbReference type="EC" id="2.4.2.1"/>
    </reaction>
</comment>
<comment type="catalytic activity">
    <reaction evidence="1">
        <text>inosine + phosphate = alpha-D-ribose 1-phosphate + hypoxanthine</text>
        <dbReference type="Rhea" id="RHEA:27646"/>
        <dbReference type="ChEBI" id="CHEBI:17368"/>
        <dbReference type="ChEBI" id="CHEBI:17596"/>
        <dbReference type="ChEBI" id="CHEBI:43474"/>
        <dbReference type="ChEBI" id="CHEBI:57720"/>
        <dbReference type="EC" id="2.4.2.1"/>
    </reaction>
</comment>
<comment type="catalytic activity">
    <reaction evidence="1">
        <text>thymidine + phosphate = 2-deoxy-alpha-D-ribose 1-phosphate + thymine</text>
        <dbReference type="Rhea" id="RHEA:16037"/>
        <dbReference type="ChEBI" id="CHEBI:17748"/>
        <dbReference type="ChEBI" id="CHEBI:17821"/>
        <dbReference type="ChEBI" id="CHEBI:43474"/>
        <dbReference type="ChEBI" id="CHEBI:57259"/>
        <dbReference type="EC" id="2.4.2.2"/>
    </reaction>
</comment>
<comment type="catalytic activity">
    <reaction evidence="1">
        <text>uridine + phosphate = alpha-D-ribose 1-phosphate + uracil</text>
        <dbReference type="Rhea" id="RHEA:24388"/>
        <dbReference type="ChEBI" id="CHEBI:16704"/>
        <dbReference type="ChEBI" id="CHEBI:17568"/>
        <dbReference type="ChEBI" id="CHEBI:43474"/>
        <dbReference type="ChEBI" id="CHEBI:57720"/>
        <dbReference type="EC" id="2.4.2.2"/>
    </reaction>
</comment>
<comment type="catalytic activity">
    <reaction evidence="1">
        <text>xanthosine + phosphate = alpha-D-ribose 1-phosphate + xanthine</text>
        <dbReference type="Rhea" id="RHEA:27638"/>
        <dbReference type="ChEBI" id="CHEBI:17712"/>
        <dbReference type="ChEBI" id="CHEBI:18107"/>
        <dbReference type="ChEBI" id="CHEBI:43474"/>
        <dbReference type="ChEBI" id="CHEBI:57720"/>
        <dbReference type="EC" id="2.4.2.1"/>
    </reaction>
</comment>
<comment type="similarity">
    <text evidence="1">Belongs to the nucleoside phosphorylase PpnP family.</text>
</comment>
<keyword id="KW-0328">Glycosyltransferase</keyword>
<keyword id="KW-0808">Transferase</keyword>
<proteinExistence type="inferred from homology"/>
<name>PPNP_YERPY</name>
<sequence>MLKFNEYFTGKVKSIGFDSDSIGPASVGVMEKGEYTFSTAKAEEMTVITGSLKVLIPGSPDWQTFMPGETFYIPGESEFNLQVAEASSYLCKYLS</sequence>
<protein>
    <recommendedName>
        <fullName evidence="1">Pyrimidine/purine nucleoside phosphorylase</fullName>
        <ecNumber evidence="1">2.4.2.1</ecNumber>
        <ecNumber evidence="1">2.4.2.2</ecNumber>
    </recommendedName>
    <alternativeName>
        <fullName evidence="1">Adenosine phosphorylase</fullName>
    </alternativeName>
    <alternativeName>
        <fullName evidence="1">Cytidine phosphorylase</fullName>
    </alternativeName>
    <alternativeName>
        <fullName evidence="1">Guanosine phosphorylase</fullName>
    </alternativeName>
    <alternativeName>
        <fullName evidence="1">Inosine phosphorylase</fullName>
    </alternativeName>
    <alternativeName>
        <fullName evidence="1">Thymidine phosphorylase</fullName>
    </alternativeName>
    <alternativeName>
        <fullName evidence="1">Uridine phosphorylase</fullName>
    </alternativeName>
    <alternativeName>
        <fullName evidence="1">Xanthosine phosphorylase</fullName>
    </alternativeName>
</protein>
<organism>
    <name type="scientific">Yersinia pseudotuberculosis serotype O:3 (strain YPIII)</name>
    <dbReference type="NCBI Taxonomy" id="502800"/>
    <lineage>
        <taxon>Bacteria</taxon>
        <taxon>Pseudomonadati</taxon>
        <taxon>Pseudomonadota</taxon>
        <taxon>Gammaproteobacteria</taxon>
        <taxon>Enterobacterales</taxon>
        <taxon>Yersiniaceae</taxon>
        <taxon>Yersinia</taxon>
    </lineage>
</organism>
<reference key="1">
    <citation type="submission" date="2008-02" db="EMBL/GenBank/DDBJ databases">
        <title>Complete sequence of Yersinia pseudotuberculosis YPIII.</title>
        <authorList>
            <consortium name="US DOE Joint Genome Institute"/>
            <person name="Copeland A."/>
            <person name="Lucas S."/>
            <person name="Lapidus A."/>
            <person name="Glavina del Rio T."/>
            <person name="Dalin E."/>
            <person name="Tice H."/>
            <person name="Bruce D."/>
            <person name="Goodwin L."/>
            <person name="Pitluck S."/>
            <person name="Munk A.C."/>
            <person name="Brettin T."/>
            <person name="Detter J.C."/>
            <person name="Han C."/>
            <person name="Tapia R."/>
            <person name="Schmutz J."/>
            <person name="Larimer F."/>
            <person name="Land M."/>
            <person name="Hauser L."/>
            <person name="Challacombe J.F."/>
            <person name="Green L."/>
            <person name="Lindler L.E."/>
            <person name="Nikolich M.P."/>
            <person name="Richardson P."/>
        </authorList>
    </citation>
    <scope>NUCLEOTIDE SEQUENCE [LARGE SCALE GENOMIC DNA]</scope>
    <source>
        <strain>YPIII</strain>
    </source>
</reference>
<evidence type="ECO:0000255" key="1">
    <source>
        <dbReference type="HAMAP-Rule" id="MF_01537"/>
    </source>
</evidence>
<gene>
    <name evidence="1" type="primary">ppnP</name>
    <name type="ordered locus">YPK_3281</name>
</gene>
<dbReference type="EC" id="2.4.2.1" evidence="1"/>
<dbReference type="EC" id="2.4.2.2" evidence="1"/>
<dbReference type="EMBL" id="CP000950">
    <property type="protein sequence ID" value="ACA69550.1"/>
    <property type="molecule type" value="Genomic_DNA"/>
</dbReference>
<dbReference type="RefSeq" id="WP_002208692.1">
    <property type="nucleotide sequence ID" value="NZ_CP009792.1"/>
</dbReference>
<dbReference type="SMR" id="B1JIG6"/>
<dbReference type="GeneID" id="57975503"/>
<dbReference type="KEGG" id="ypy:YPK_3281"/>
<dbReference type="PATRIC" id="fig|502800.11.peg.4012"/>
<dbReference type="GO" id="GO:0005829">
    <property type="term" value="C:cytosol"/>
    <property type="evidence" value="ECO:0007669"/>
    <property type="project" value="TreeGrafter"/>
</dbReference>
<dbReference type="GO" id="GO:0047975">
    <property type="term" value="F:guanosine phosphorylase activity"/>
    <property type="evidence" value="ECO:0007669"/>
    <property type="project" value="UniProtKB-EC"/>
</dbReference>
<dbReference type="GO" id="GO:0004731">
    <property type="term" value="F:purine-nucleoside phosphorylase activity"/>
    <property type="evidence" value="ECO:0007669"/>
    <property type="project" value="UniProtKB-UniRule"/>
</dbReference>
<dbReference type="GO" id="GO:0009032">
    <property type="term" value="F:thymidine phosphorylase activity"/>
    <property type="evidence" value="ECO:0007669"/>
    <property type="project" value="UniProtKB-EC"/>
</dbReference>
<dbReference type="GO" id="GO:0004850">
    <property type="term" value="F:uridine phosphorylase activity"/>
    <property type="evidence" value="ECO:0007669"/>
    <property type="project" value="UniProtKB-EC"/>
</dbReference>
<dbReference type="FunFam" id="2.60.120.10:FF:000016">
    <property type="entry name" value="Pyrimidine/purine nucleoside phosphorylase"/>
    <property type="match status" value="1"/>
</dbReference>
<dbReference type="Gene3D" id="2.60.120.10">
    <property type="entry name" value="Jelly Rolls"/>
    <property type="match status" value="1"/>
</dbReference>
<dbReference type="HAMAP" id="MF_01537">
    <property type="entry name" value="Nucleos_phosphorylase_PpnP"/>
    <property type="match status" value="1"/>
</dbReference>
<dbReference type="InterPro" id="IPR009664">
    <property type="entry name" value="Ppnp"/>
</dbReference>
<dbReference type="InterPro" id="IPR014710">
    <property type="entry name" value="RmlC-like_jellyroll"/>
</dbReference>
<dbReference type="InterPro" id="IPR011051">
    <property type="entry name" value="RmlC_Cupin_sf"/>
</dbReference>
<dbReference type="NCBIfam" id="NF007875">
    <property type="entry name" value="PRK10579.1"/>
    <property type="match status" value="1"/>
</dbReference>
<dbReference type="PANTHER" id="PTHR36540">
    <property type="entry name" value="PYRIMIDINE/PURINE NUCLEOSIDE PHOSPHORYLASE"/>
    <property type="match status" value="1"/>
</dbReference>
<dbReference type="PANTHER" id="PTHR36540:SF1">
    <property type="entry name" value="PYRIMIDINE_PURINE NUCLEOSIDE PHOSPHORYLASE"/>
    <property type="match status" value="1"/>
</dbReference>
<dbReference type="Pfam" id="PF06865">
    <property type="entry name" value="Ppnp"/>
    <property type="match status" value="1"/>
</dbReference>
<dbReference type="SUPFAM" id="SSF51182">
    <property type="entry name" value="RmlC-like cupins"/>
    <property type="match status" value="1"/>
</dbReference>
<accession>B1JIG6</accession>